<name>DGTL1_MYCSS</name>
<feature type="chain" id="PRO_1000066425" description="Deoxyguanosinetriphosphate triphosphohydrolase-like protein">
    <location>
        <begin position="1"/>
        <end position="423"/>
    </location>
</feature>
<feature type="domain" description="HD" evidence="2">
    <location>
        <begin position="72"/>
        <end position="217"/>
    </location>
</feature>
<feature type="region of interest" description="Disordered" evidence="3">
    <location>
        <begin position="1"/>
        <end position="35"/>
    </location>
</feature>
<feature type="compositionally biased region" description="Basic and acidic residues" evidence="3">
    <location>
        <begin position="11"/>
        <end position="22"/>
    </location>
</feature>
<organism>
    <name type="scientific">Mycobacterium sp. (strain MCS)</name>
    <dbReference type="NCBI Taxonomy" id="164756"/>
    <lineage>
        <taxon>Bacteria</taxon>
        <taxon>Bacillati</taxon>
        <taxon>Actinomycetota</taxon>
        <taxon>Actinomycetes</taxon>
        <taxon>Mycobacteriales</taxon>
        <taxon>Mycobacteriaceae</taxon>
        <taxon>Mycobacterium</taxon>
    </lineage>
</organism>
<dbReference type="EMBL" id="CP000384">
    <property type="protein sequence ID" value="ABG09550.1"/>
    <property type="molecule type" value="Genomic_DNA"/>
</dbReference>
<dbReference type="SMR" id="Q1B6D4"/>
<dbReference type="KEGG" id="mmc:Mmcs_3443"/>
<dbReference type="HOGENOM" id="CLU_028163_0_1_11"/>
<dbReference type="BioCyc" id="MSP164756:G1G6O-3513-MONOMER"/>
<dbReference type="GO" id="GO:0008832">
    <property type="term" value="F:dGTPase activity"/>
    <property type="evidence" value="ECO:0007669"/>
    <property type="project" value="TreeGrafter"/>
</dbReference>
<dbReference type="GO" id="GO:0006203">
    <property type="term" value="P:dGTP catabolic process"/>
    <property type="evidence" value="ECO:0007669"/>
    <property type="project" value="TreeGrafter"/>
</dbReference>
<dbReference type="CDD" id="cd00077">
    <property type="entry name" value="HDc"/>
    <property type="match status" value="1"/>
</dbReference>
<dbReference type="Gene3D" id="1.10.3210.10">
    <property type="entry name" value="Hypothetical protein af1432"/>
    <property type="match status" value="1"/>
</dbReference>
<dbReference type="HAMAP" id="MF_01212">
    <property type="entry name" value="dGTPase_type2"/>
    <property type="match status" value="1"/>
</dbReference>
<dbReference type="InterPro" id="IPR006261">
    <property type="entry name" value="dGTPase"/>
</dbReference>
<dbReference type="InterPro" id="IPR050135">
    <property type="entry name" value="dGTPase-like"/>
</dbReference>
<dbReference type="InterPro" id="IPR023023">
    <property type="entry name" value="dNTPase_2"/>
</dbReference>
<dbReference type="InterPro" id="IPR003607">
    <property type="entry name" value="HD/PDEase_dom"/>
</dbReference>
<dbReference type="InterPro" id="IPR006674">
    <property type="entry name" value="HD_domain"/>
</dbReference>
<dbReference type="InterPro" id="IPR026875">
    <property type="entry name" value="PHydrolase_assoc_dom"/>
</dbReference>
<dbReference type="NCBIfam" id="TIGR01353">
    <property type="entry name" value="dGTP_triPase"/>
    <property type="match status" value="1"/>
</dbReference>
<dbReference type="NCBIfam" id="NF002829">
    <property type="entry name" value="PRK03007.1"/>
    <property type="match status" value="1"/>
</dbReference>
<dbReference type="PANTHER" id="PTHR11373:SF32">
    <property type="entry name" value="DEOXYGUANOSINETRIPHOSPHATE TRIPHOSPHOHYDROLASE"/>
    <property type="match status" value="1"/>
</dbReference>
<dbReference type="PANTHER" id="PTHR11373">
    <property type="entry name" value="DEOXYNUCLEOSIDE TRIPHOSPHATE TRIPHOSPHOHYDROLASE"/>
    <property type="match status" value="1"/>
</dbReference>
<dbReference type="Pfam" id="PF01966">
    <property type="entry name" value="HD"/>
    <property type="match status" value="1"/>
</dbReference>
<dbReference type="Pfam" id="PF13286">
    <property type="entry name" value="HD_assoc"/>
    <property type="match status" value="1"/>
</dbReference>
<dbReference type="SMART" id="SM00471">
    <property type="entry name" value="HDc"/>
    <property type="match status" value="1"/>
</dbReference>
<dbReference type="SUPFAM" id="SSF109604">
    <property type="entry name" value="HD-domain/PDEase-like"/>
    <property type="match status" value="1"/>
</dbReference>
<dbReference type="PROSITE" id="PS51831">
    <property type="entry name" value="HD"/>
    <property type="match status" value="1"/>
</dbReference>
<sequence>MNPRLQDSYDEFDRQRRVDEPAKSAVLPGTGTEHRTDFARDRARVLHCAALRRLADKTQVVGPREGDTPRTRLTHSLEVAQIGRGMAVGLGCDPDLVDLAGLAHDIGHPPYGHNGERALNEIAKAFGGFEGNAQNFRILTRLEPKVLDATGRSAGLNLTRAALDAVTKYPWQRGDRTKFGFYGDDMAAAWWVRDGAPAERPCLEAQVMDWADDVAYSVHDVEDGVVSGRIDLRVLADDDAAASLARLGAEAFPTLAPDDLLAAAERLSQMPVVSQVGKYDGTLGASVALKRMTSELVGRFANAAITETRSVAGGGALHRFVTELAVPTLVRAEVAVLKMLALQFIMSDHGHLGIQADQRTRIHEVALILWGQAPSSLDPLFAPEFVAAEDDGARLRVVIDQIASYTEGRLERVHEARSPRPLD</sequence>
<gene>
    <name type="ordered locus">Mmcs_3443</name>
</gene>
<reference key="1">
    <citation type="submission" date="2006-06" db="EMBL/GenBank/DDBJ databases">
        <title>Complete sequence of chromosome of Mycobacterium sp. MCS.</title>
        <authorList>
            <consortium name="US DOE Joint Genome Institute"/>
            <person name="Copeland A."/>
            <person name="Lucas S."/>
            <person name="Lapidus A."/>
            <person name="Barry K."/>
            <person name="Detter J.C."/>
            <person name="Glavina del Rio T."/>
            <person name="Hammon N."/>
            <person name="Israni S."/>
            <person name="Dalin E."/>
            <person name="Tice H."/>
            <person name="Pitluck S."/>
            <person name="Martinez M."/>
            <person name="Schmutz J."/>
            <person name="Larimer F."/>
            <person name="Land M."/>
            <person name="Hauser L."/>
            <person name="Kyrpides N."/>
            <person name="Kim E."/>
            <person name="Miller C.D."/>
            <person name="Hughes J.E."/>
            <person name="Anderson A.J."/>
            <person name="Sims R.C."/>
            <person name="Richardson P."/>
        </authorList>
    </citation>
    <scope>NUCLEOTIDE SEQUENCE [LARGE SCALE GENOMIC DNA]</scope>
    <source>
        <strain>MCS</strain>
    </source>
</reference>
<protein>
    <recommendedName>
        <fullName evidence="1">Deoxyguanosinetriphosphate triphosphohydrolase-like protein</fullName>
    </recommendedName>
</protein>
<accession>Q1B6D4</accession>
<proteinExistence type="inferred from homology"/>
<keyword id="KW-0378">Hydrolase</keyword>
<comment type="similarity">
    <text evidence="1">Belongs to the dGTPase family. Type 2 subfamily.</text>
</comment>
<evidence type="ECO:0000255" key="1">
    <source>
        <dbReference type="HAMAP-Rule" id="MF_01212"/>
    </source>
</evidence>
<evidence type="ECO:0000255" key="2">
    <source>
        <dbReference type="PROSITE-ProRule" id="PRU01175"/>
    </source>
</evidence>
<evidence type="ECO:0000256" key="3">
    <source>
        <dbReference type="SAM" id="MobiDB-lite"/>
    </source>
</evidence>